<proteinExistence type="evidence at protein level"/>
<feature type="chain" id="PRO_0000203277" description="Chromosome segregation in meiosis protein 3">
    <location>
        <begin position="1"/>
        <end position="317"/>
    </location>
</feature>
<feature type="region of interest" description="Disordered" evidence="1">
    <location>
        <begin position="16"/>
        <end position="35"/>
    </location>
</feature>
<feature type="helix" evidence="12">
    <location>
        <begin position="56"/>
        <end position="60"/>
    </location>
</feature>
<feature type="turn" evidence="12">
    <location>
        <begin position="62"/>
        <end position="64"/>
    </location>
</feature>
<feature type="helix" evidence="12">
    <location>
        <begin position="65"/>
        <end position="75"/>
    </location>
</feature>
<feature type="helix" evidence="12">
    <location>
        <begin position="84"/>
        <end position="102"/>
    </location>
</feature>
<feature type="helix" evidence="12">
    <location>
        <begin position="108"/>
        <end position="120"/>
    </location>
</feature>
<feature type="helix" evidence="12">
    <location>
        <begin position="123"/>
        <end position="137"/>
    </location>
</feature>
<comment type="function">
    <text evidence="2 5 6 7 8 9 10">Forms a fork protection complex (FPC) with TOF1 which is required for chromosome segregation during meiosis and DNA damage repair. FPC coordinates leading and lagging strand synthesis and moves with the replication fork. FPC stabilizes replication forks in a configuration that is recognized by replication checkpoint sensors and protects stalled replication forks against the fork-releasing activity of RRM3 helicase.</text>
</comment>
<comment type="subunit">
    <text evidence="7">Component of the fork protection complex (FPC) consisting of TOF1 and CSM3.</text>
</comment>
<comment type="interaction">
    <interactant intactId="EBI-28093">
        <id>Q04659</id>
    </interactant>
    <interactant intactId="EBI-28257">
        <id>P53840</id>
        <label>TOF1</label>
    </interactant>
    <organismsDiffer>false</organismsDiffer>
    <experiments>7</experiments>
</comment>
<comment type="subcellular location">
    <subcellularLocation>
        <location evidence="3">Nucleus</location>
    </subcellularLocation>
</comment>
<comment type="miscellaneous">
    <text evidence="4">Present with 358 molecules/cell in log phase SD medium.</text>
</comment>
<comment type="similarity">
    <text evidence="11">Belongs to the CSM3 family.</text>
</comment>
<protein>
    <recommendedName>
        <fullName>Chromosome segregation in meiosis protein 3</fullName>
    </recommendedName>
</protein>
<reference key="1">
    <citation type="journal article" date="1997" name="Nature">
        <title>The nucleotide sequence of Saccharomyces cerevisiae chromosome XIII.</title>
        <authorList>
            <person name="Bowman S."/>
            <person name="Churcher C.M."/>
            <person name="Badcock K."/>
            <person name="Brown D."/>
            <person name="Chillingworth T."/>
            <person name="Connor R."/>
            <person name="Dedman K."/>
            <person name="Devlin K."/>
            <person name="Gentles S."/>
            <person name="Hamlin N."/>
            <person name="Hunt S."/>
            <person name="Jagels K."/>
            <person name="Lye G."/>
            <person name="Moule S."/>
            <person name="Odell C."/>
            <person name="Pearson D."/>
            <person name="Rajandream M.A."/>
            <person name="Rice P."/>
            <person name="Skelton J."/>
            <person name="Walsh S.V."/>
            <person name="Whitehead S."/>
            <person name="Barrell B.G."/>
        </authorList>
    </citation>
    <scope>NUCLEOTIDE SEQUENCE [LARGE SCALE GENOMIC DNA]</scope>
    <source>
        <strain>ATCC 204508 / S288c</strain>
    </source>
</reference>
<reference key="2">
    <citation type="journal article" date="2014" name="G3 (Bethesda)">
        <title>The reference genome sequence of Saccharomyces cerevisiae: Then and now.</title>
        <authorList>
            <person name="Engel S.R."/>
            <person name="Dietrich F.S."/>
            <person name="Fisk D.G."/>
            <person name="Binkley G."/>
            <person name="Balakrishnan R."/>
            <person name="Costanzo M.C."/>
            <person name="Dwight S.S."/>
            <person name="Hitz B.C."/>
            <person name="Karra K."/>
            <person name="Nash R.S."/>
            <person name="Weng S."/>
            <person name="Wong E.D."/>
            <person name="Lloyd P."/>
            <person name="Skrzypek M.S."/>
            <person name="Miyasato S.R."/>
            <person name="Simison M."/>
            <person name="Cherry J.M."/>
        </authorList>
    </citation>
    <scope>GENOME REANNOTATION</scope>
    <source>
        <strain>ATCC 204508 / S288c</strain>
    </source>
</reference>
<reference key="3">
    <citation type="journal article" date="2007" name="Genome Res.">
        <title>Approaching a complete repository of sequence-verified protein-encoding clones for Saccharomyces cerevisiae.</title>
        <authorList>
            <person name="Hu Y."/>
            <person name="Rolfs A."/>
            <person name="Bhullar B."/>
            <person name="Murthy T.V.S."/>
            <person name="Zhu C."/>
            <person name="Berger M.F."/>
            <person name="Camargo A.A."/>
            <person name="Kelley F."/>
            <person name="McCarron S."/>
            <person name="Jepson D."/>
            <person name="Richardson A."/>
            <person name="Raphael J."/>
            <person name="Moreira D."/>
            <person name="Taycher E."/>
            <person name="Zuo D."/>
            <person name="Mohr S."/>
            <person name="Kane M.F."/>
            <person name="Williamson J."/>
            <person name="Simpson A.J.G."/>
            <person name="Bulyk M.L."/>
            <person name="Harlow E."/>
            <person name="Marsischky G."/>
            <person name="Kolodner R.D."/>
            <person name="LaBaer J."/>
        </authorList>
    </citation>
    <scope>NUCLEOTIDE SEQUENCE [GENOMIC DNA]</scope>
    <source>
        <strain>ATCC 204508 / S288c</strain>
    </source>
</reference>
<reference key="4">
    <citation type="journal article" date="2001" name="Curr. Biol.">
        <title>A screen for genes required for meiosis and spore formation based on whole-genome expression.</title>
        <authorList>
            <person name="Rabitsch K.P."/>
            <person name="Toth A."/>
            <person name="Galova M."/>
            <person name="Schleiffer A."/>
            <person name="Schaffner G."/>
            <person name="Aigner E."/>
            <person name="Rupp C."/>
            <person name="Penkner A.M."/>
            <person name="Moreno-Borchart A.C."/>
            <person name="Primig M."/>
            <person name="Esposito R.E."/>
            <person name="Klein F."/>
            <person name="Knop M."/>
            <person name="Nasmyth K."/>
        </authorList>
    </citation>
    <scope>FUNCTION</scope>
</reference>
<reference key="5">
    <citation type="journal article" date="2003" name="Nature">
        <title>Global analysis of protein localization in budding yeast.</title>
        <authorList>
            <person name="Huh W.-K."/>
            <person name="Falvo J.V."/>
            <person name="Gerke L.C."/>
            <person name="Carroll A.S."/>
            <person name="Howson R.W."/>
            <person name="Weissman J.S."/>
            <person name="O'Shea E.K."/>
        </authorList>
    </citation>
    <scope>SUBCELLULAR LOCATION [LARGE SCALE ANALYSIS]</scope>
</reference>
<reference key="6">
    <citation type="journal article" date="2003" name="Nature">
        <title>Global analysis of protein expression in yeast.</title>
        <authorList>
            <person name="Ghaemmaghami S."/>
            <person name="Huh W.-K."/>
            <person name="Bower K."/>
            <person name="Howson R.W."/>
            <person name="Belle A."/>
            <person name="Dephoure N."/>
            <person name="O'Shea E.K."/>
            <person name="Weissman J.S."/>
        </authorList>
    </citation>
    <scope>LEVEL OF PROTEIN EXPRESSION [LARGE SCALE ANALYSIS]</scope>
</reference>
<reference key="7">
    <citation type="journal article" date="2004" name="Mol. Biol. Cell">
        <title>Identification of protein complexes required for efficient sister chromatid cohesion.</title>
        <authorList>
            <person name="Mayer M.L."/>
            <person name="Pot I."/>
            <person name="Chang M."/>
            <person name="Xu H."/>
            <person name="Aneliunas V."/>
            <person name="Kwok T."/>
            <person name="Newitt R."/>
            <person name="Aebersold R."/>
            <person name="Boone C."/>
            <person name="Brown G.W."/>
            <person name="Hieter P."/>
        </authorList>
    </citation>
    <scope>FUNCTION</scope>
    <scope>INTERACTION WITH TOF1</scope>
</reference>
<reference key="8">
    <citation type="journal article" date="2004" name="Mol. Cell. Biol.">
        <title>Mrc1 is required for sister chromatid cohesion to aid in recombination repair of spontaneous damage.</title>
        <authorList>
            <person name="Xu H."/>
            <person name="Boone C."/>
            <person name="Klein H.L."/>
        </authorList>
    </citation>
    <scope>FUNCTION</scope>
</reference>
<reference key="9">
    <citation type="journal article" date="2005" name="J. Mol. Biol.">
        <title>Uncoupling of unwinding from DNA synthesis implies regulation of MCM helicase by Tof1/Mrc1/Csm3 checkpoint complex.</title>
        <authorList>
            <person name="Nedelcheva M.N."/>
            <person name="Roguev A."/>
            <person name="Dolapchiev L.B."/>
            <person name="Shevchenko A."/>
            <person name="Taskov H.B."/>
            <person name="Shevchenko A."/>
            <person name="Stewart A.F."/>
            <person name="Stoynov S.S."/>
        </authorList>
    </citation>
    <scope>FUNCTION</scope>
    <scope>IDENTIFICATION IN THE FPC COMPLEX</scope>
    <scope>IDENTIFICATION BY MASS SPECTROMETRY</scope>
</reference>
<reference key="10">
    <citation type="journal article" date="2005" name="Mol. Cell. Biol.">
        <title>Disruption of mechanisms that prevent rereplication triggers a DNA damage response.</title>
        <authorList>
            <person name="Archambault V."/>
            <person name="Ikui A.E."/>
            <person name="Drapkin B.J."/>
            <person name="Cross F.R."/>
        </authorList>
    </citation>
    <scope>FUNCTION</scope>
</reference>
<reference key="11">
    <citation type="journal article" date="2006" name="Genetics">
        <title>Genetic analysis of Saccharomyces cerevisiae H2A serine 129 mutant suggests a functional relationship between H2A and the sister-chromatid cohesion partners Csm3-Tof1 for the repair of topoisomerase I-induced DNA damage.</title>
        <authorList>
            <person name="Redon C."/>
            <person name="Pilch D.R."/>
            <person name="Bonner W.M."/>
        </authorList>
    </citation>
    <scope>FUNCTION OF THE FPC COMPLEX</scope>
</reference>
<reference key="12">
    <citation type="journal article" date="2006" name="Proc. Natl. Acad. Sci. U.S.A.">
        <title>The Tof1p-Csm3p protein complex counteracts the Rrm3p helicase to control replication termination of Saccharomyces cerevisiae.</title>
        <authorList>
            <person name="Mohanty B.K."/>
            <person name="Bairwa N.K."/>
            <person name="Bastia D."/>
        </authorList>
    </citation>
    <scope>FUNCTION OF THE FPC COMPLEX</scope>
</reference>
<accession>Q04659</accession>
<accession>D6VZM3</accession>
<keyword id="KW-0002">3D-structure</keyword>
<keyword id="KW-0131">Cell cycle</keyword>
<keyword id="KW-0227">DNA damage</keyword>
<keyword id="KW-0234">DNA repair</keyword>
<keyword id="KW-0236">DNA replication inhibitor</keyword>
<keyword id="KW-0469">Meiosis</keyword>
<keyword id="KW-0539">Nucleus</keyword>
<keyword id="KW-1185">Reference proteome</keyword>
<dbReference type="EMBL" id="Z49703">
    <property type="protein sequence ID" value="CAA89758.1"/>
    <property type="molecule type" value="Genomic_DNA"/>
</dbReference>
<dbReference type="EMBL" id="AY558400">
    <property type="protein sequence ID" value="AAS56726.1"/>
    <property type="molecule type" value="Genomic_DNA"/>
</dbReference>
<dbReference type="EMBL" id="BK006946">
    <property type="protein sequence ID" value="DAA09947.1"/>
    <property type="molecule type" value="Genomic_DNA"/>
</dbReference>
<dbReference type="PIR" id="S54548">
    <property type="entry name" value="S54548"/>
</dbReference>
<dbReference type="RefSeq" id="NP_013763.1">
    <property type="nucleotide sequence ID" value="NM_001182545.1"/>
</dbReference>
<dbReference type="PDB" id="6SKL">
    <property type="method" value="EM"/>
    <property type="resolution" value="3.70 A"/>
    <property type="chains" value="Y=1-317"/>
</dbReference>
<dbReference type="PDB" id="7PMK">
    <property type="method" value="EM"/>
    <property type="resolution" value="3.20 A"/>
    <property type="chains" value="Y=1-317"/>
</dbReference>
<dbReference type="PDB" id="7PMN">
    <property type="method" value="EM"/>
    <property type="resolution" value="3.20 A"/>
    <property type="chains" value="Y=1-317"/>
</dbReference>
<dbReference type="PDB" id="8B9A">
    <property type="method" value="EM"/>
    <property type="resolution" value="3.50 A"/>
    <property type="chains" value="Y=1-317"/>
</dbReference>
<dbReference type="PDB" id="8B9B">
    <property type="method" value="EM"/>
    <property type="resolution" value="3.50 A"/>
    <property type="chains" value="Y=1-317"/>
</dbReference>
<dbReference type="PDB" id="8B9C">
    <property type="method" value="EM"/>
    <property type="resolution" value="4.60 A"/>
    <property type="chains" value="Y=1-317"/>
</dbReference>
<dbReference type="PDB" id="8KG6">
    <property type="method" value="EM"/>
    <property type="resolution" value="3.07 A"/>
    <property type="chains" value="L=1-317"/>
</dbReference>
<dbReference type="PDB" id="8XGC">
    <property type="method" value="EM"/>
    <property type="resolution" value="3.70 A"/>
    <property type="chains" value="J=1-317"/>
</dbReference>
<dbReference type="PDBsum" id="6SKL"/>
<dbReference type="PDBsum" id="7PMK"/>
<dbReference type="PDBsum" id="7PMN"/>
<dbReference type="PDBsum" id="8B9A"/>
<dbReference type="PDBsum" id="8B9B"/>
<dbReference type="PDBsum" id="8B9C"/>
<dbReference type="PDBsum" id="8KG6"/>
<dbReference type="PDBsum" id="8XGC"/>
<dbReference type="EMDB" id="EMD-10227"/>
<dbReference type="EMDB" id="EMD-13537"/>
<dbReference type="EMDB" id="EMD-13539"/>
<dbReference type="EMDB" id="EMD-15924"/>
<dbReference type="EMDB" id="EMD-37211"/>
<dbReference type="EMDB" id="EMD-38317"/>
<dbReference type="SMR" id="Q04659"/>
<dbReference type="BioGRID" id="35222">
    <property type="interactions" value="340"/>
</dbReference>
<dbReference type="ComplexPortal" id="CPX-1673">
    <property type="entry name" value="Replication fork protection complex"/>
</dbReference>
<dbReference type="DIP" id="DIP-1944N"/>
<dbReference type="FunCoup" id="Q04659">
    <property type="interactions" value="346"/>
</dbReference>
<dbReference type="IntAct" id="Q04659">
    <property type="interactions" value="18"/>
</dbReference>
<dbReference type="MINT" id="Q04659"/>
<dbReference type="STRING" id="4932.YMR048W"/>
<dbReference type="iPTMnet" id="Q04659"/>
<dbReference type="PaxDb" id="4932-YMR048W"/>
<dbReference type="PeptideAtlas" id="Q04659"/>
<dbReference type="EnsemblFungi" id="YMR048W_mRNA">
    <property type="protein sequence ID" value="YMR048W"/>
    <property type="gene ID" value="YMR048W"/>
</dbReference>
<dbReference type="GeneID" id="855067"/>
<dbReference type="KEGG" id="sce:YMR048W"/>
<dbReference type="AGR" id="SGD:S000004651"/>
<dbReference type="SGD" id="S000004651">
    <property type="gene designation" value="CSM3"/>
</dbReference>
<dbReference type="VEuPathDB" id="FungiDB:YMR048W"/>
<dbReference type="eggNOG" id="KOG3004">
    <property type="taxonomic scope" value="Eukaryota"/>
</dbReference>
<dbReference type="HOGENOM" id="CLU_068300_0_0_1"/>
<dbReference type="InParanoid" id="Q04659"/>
<dbReference type="OMA" id="EWEMNDI"/>
<dbReference type="OrthoDB" id="437078at2759"/>
<dbReference type="BioCyc" id="YEAST:G3O-32753-MONOMER"/>
<dbReference type="BioGRID-ORCS" id="855067">
    <property type="hits" value="1 hit in 10 CRISPR screens"/>
</dbReference>
<dbReference type="PRO" id="PR:Q04659"/>
<dbReference type="Proteomes" id="UP000002311">
    <property type="component" value="Chromosome XIII"/>
</dbReference>
<dbReference type="RNAct" id="Q04659">
    <property type="molecule type" value="protein"/>
</dbReference>
<dbReference type="GO" id="GO:0005737">
    <property type="term" value="C:cytoplasm"/>
    <property type="evidence" value="ECO:0007005"/>
    <property type="project" value="SGD"/>
</dbReference>
<dbReference type="GO" id="GO:0043596">
    <property type="term" value="C:nuclear replication fork"/>
    <property type="evidence" value="ECO:0000314"/>
    <property type="project" value="ComplexPortal"/>
</dbReference>
<dbReference type="GO" id="GO:0005634">
    <property type="term" value="C:nucleus"/>
    <property type="evidence" value="ECO:0000314"/>
    <property type="project" value="ComplexPortal"/>
</dbReference>
<dbReference type="GO" id="GO:0031298">
    <property type="term" value="C:replication fork protection complex"/>
    <property type="evidence" value="ECO:0000314"/>
    <property type="project" value="SGD"/>
</dbReference>
<dbReference type="GO" id="GO:0003677">
    <property type="term" value="F:DNA binding"/>
    <property type="evidence" value="ECO:0000318"/>
    <property type="project" value="GO_Central"/>
</dbReference>
<dbReference type="GO" id="GO:0006281">
    <property type="term" value="P:DNA repair"/>
    <property type="evidence" value="ECO:0000314"/>
    <property type="project" value="ComplexPortal"/>
</dbReference>
<dbReference type="GO" id="GO:0000076">
    <property type="term" value="P:DNA replication checkpoint signaling"/>
    <property type="evidence" value="ECO:0000318"/>
    <property type="project" value="GO_Central"/>
</dbReference>
<dbReference type="GO" id="GO:0034087">
    <property type="term" value="P:establishment of mitotic sister chromatid cohesion"/>
    <property type="evidence" value="ECO:0000315"/>
    <property type="project" value="SGD"/>
</dbReference>
<dbReference type="GO" id="GO:0043570">
    <property type="term" value="P:maintenance of DNA repeat elements"/>
    <property type="evidence" value="ECO:0000315"/>
    <property type="project" value="SGD"/>
</dbReference>
<dbReference type="GO" id="GO:0045132">
    <property type="term" value="P:meiotic chromosome segregation"/>
    <property type="evidence" value="ECO:0000315"/>
    <property type="project" value="SGD"/>
</dbReference>
<dbReference type="GO" id="GO:0007064">
    <property type="term" value="P:mitotic sister chromatid cohesion"/>
    <property type="evidence" value="ECO:0000315"/>
    <property type="project" value="SGD"/>
</dbReference>
<dbReference type="GO" id="GO:0043111">
    <property type="term" value="P:replication fork arrest"/>
    <property type="evidence" value="ECO:0000315"/>
    <property type="project" value="SGD"/>
</dbReference>
<dbReference type="GO" id="GO:0031297">
    <property type="term" value="P:replication fork processing"/>
    <property type="evidence" value="ECO:0007669"/>
    <property type="project" value="InterPro"/>
</dbReference>
<dbReference type="InterPro" id="IPR012923">
    <property type="entry name" value="Csm3"/>
</dbReference>
<dbReference type="InterPro" id="IPR040038">
    <property type="entry name" value="TIPIN/Csm3/Swi3"/>
</dbReference>
<dbReference type="PANTHER" id="PTHR13220">
    <property type="entry name" value="TIMELESS INTERACTING-RELATED"/>
    <property type="match status" value="1"/>
</dbReference>
<dbReference type="PANTHER" id="PTHR13220:SF11">
    <property type="entry name" value="TIMELESS-INTERACTING PROTEIN"/>
    <property type="match status" value="1"/>
</dbReference>
<dbReference type="Pfam" id="PF07962">
    <property type="entry name" value="Swi3"/>
    <property type="match status" value="1"/>
</dbReference>
<name>CSM3_YEAST</name>
<gene>
    <name type="primary">CSM3</name>
    <name type="ordered locus">YMR048W</name>
    <name type="ORF">YM9796.01</name>
</gene>
<sequence length="317" mass="36355">MDQDFDSLLLGFNDSDSVQKDPTVPNGLDGSVVDPTIADPTAITARKRRPQVKLTAEKLLSDKGLPYVLKNAHKRIRISSKKNSYDNLSNIIQFYQLWAHELFPKAKFKDFMKICQTVGKTDPVLREYRVSLFRDEMGMSFDVGTRETGQDLERQSPMVEEHVTSAEERPIVADSFAQDKRNVNNVDYDNDEDDDIYHLSYRNRRGRVLDERGNNETVLNNVVPPKEDLDALLKTFRVQGPVGLEENEKKLLLGWLDAHRKMEKGSMTEEDVQLIQSLEEWEMNDIEGQHTHYDLLPGGDEFGVDQDELDAMKEMGF</sequence>
<evidence type="ECO:0000256" key="1">
    <source>
        <dbReference type="SAM" id="MobiDB-lite"/>
    </source>
</evidence>
<evidence type="ECO:0000269" key="2">
    <source>
    </source>
</evidence>
<evidence type="ECO:0000269" key="3">
    <source>
    </source>
</evidence>
<evidence type="ECO:0000269" key="4">
    <source>
    </source>
</evidence>
<evidence type="ECO:0000269" key="5">
    <source>
    </source>
</evidence>
<evidence type="ECO:0000269" key="6">
    <source>
    </source>
</evidence>
<evidence type="ECO:0000269" key="7">
    <source>
    </source>
</evidence>
<evidence type="ECO:0000269" key="8">
    <source>
    </source>
</evidence>
<evidence type="ECO:0000269" key="9">
    <source>
    </source>
</evidence>
<evidence type="ECO:0000269" key="10">
    <source>
    </source>
</evidence>
<evidence type="ECO:0000305" key="11"/>
<evidence type="ECO:0007829" key="12">
    <source>
        <dbReference type="PDB" id="7PMK"/>
    </source>
</evidence>
<organism>
    <name type="scientific">Saccharomyces cerevisiae (strain ATCC 204508 / S288c)</name>
    <name type="common">Baker's yeast</name>
    <dbReference type="NCBI Taxonomy" id="559292"/>
    <lineage>
        <taxon>Eukaryota</taxon>
        <taxon>Fungi</taxon>
        <taxon>Dikarya</taxon>
        <taxon>Ascomycota</taxon>
        <taxon>Saccharomycotina</taxon>
        <taxon>Saccharomycetes</taxon>
        <taxon>Saccharomycetales</taxon>
        <taxon>Saccharomycetaceae</taxon>
        <taxon>Saccharomyces</taxon>
    </lineage>
</organism>